<protein>
    <recommendedName>
        <fullName>tRNA (carboxymethyluridine(34)-5-O)-methyltransferase ALKBH8</fullName>
        <ecNumber evidence="2">2.1.1.229</ecNumber>
    </recommendedName>
    <alternativeName>
        <fullName>Alkylated DNA repair protein alkB homolog 8</fullName>
    </alternativeName>
    <alternativeName>
        <fullName>Alpha-ketoglutarate-dependent dioxygenase ALKBH8</fullName>
    </alternativeName>
    <alternativeName>
        <fullName>S-adenosyl-L-methionine-dependent tRNA methyltransferase ALKBH8</fullName>
    </alternativeName>
</protein>
<comment type="function">
    <text evidence="2">Catalyzes the methylation of 5-carboxymethyl uridine to 5-methylcarboxymethyl uridine at the wobble position of the anticodon loop in tRNA via its methyltransferase domain. Catalyzes the last step in the formation of 5-methylcarboxymethyl uridine at the wobble position of the anticodon loop in target tRNA. Has a preference for tRNA(Arg) and tRNA(Glu), and does not bind tRNA(Lys). Binds tRNA and catalyzes the iron and alpha-ketoglutarate dependent hydroxylation of 5-methylcarboxymethyl uridine at the wobble position of the anticodon loop in tRNA via its dioxygenase domain, giving rise to 5-(S)-methoxycarbonylhydroxymethyluridine; has a preference for tRNA(Gly). Required for normal survival after DNA damage. May inhibit apoptosis and promote cell survival and angiogenesis (By similarity).</text>
</comment>
<comment type="catalytic activity">
    <reaction>
        <text>5-(carboxymethyl)uridine(34) in tRNA + S-adenosyl-L-methionine = 5-(2-methoxy-2-oxoethyl)uridine(34) in tRNA + S-adenosyl-L-homocysteine</text>
        <dbReference type="Rhea" id="RHEA:43208"/>
        <dbReference type="Rhea" id="RHEA-COMP:10407"/>
        <dbReference type="Rhea" id="RHEA-COMP:10408"/>
        <dbReference type="ChEBI" id="CHEBI:57856"/>
        <dbReference type="ChEBI" id="CHEBI:59789"/>
        <dbReference type="ChEBI" id="CHEBI:74851"/>
        <dbReference type="ChEBI" id="CHEBI:74882"/>
        <dbReference type="EC" id="2.1.1.229"/>
    </reaction>
</comment>
<comment type="cofactor">
    <cofactor evidence="2">
        <name>Fe(2+)</name>
        <dbReference type="ChEBI" id="CHEBI:29033"/>
    </cofactor>
    <text evidence="2">Binds 1 Fe(2+) ion per subunit.</text>
</comment>
<comment type="subunit">
    <text evidence="2">Interacts with TRMT112.</text>
</comment>
<comment type="subcellular location">
    <subcellularLocation>
        <location evidence="2">Cytoplasm</location>
    </subcellularLocation>
    <subcellularLocation>
        <location evidence="2">Nucleus</location>
    </subcellularLocation>
    <text evidence="2">Predominantly cytoplasmic.</text>
</comment>
<comment type="similarity">
    <text evidence="5">Belongs to the alkB family.</text>
</comment>
<gene>
    <name type="primary">ALKBH8</name>
    <name type="ORF">QtrA-10552</name>
</gene>
<proteinExistence type="evidence at transcript level"/>
<sequence>MDSSHQSNYKLSKTEKKFLRKQIKARHTLLRHEGIETVSYATQSLVVANGGLGNGVSRNQLLPVLEKCGLVDALLMPPNKPYSFARYKTTEESKRAYVTLNGKEVVDDLGQKIILYLNFVEKAQWKELRPQALPPGLMVVEEIISSEEEKMLLESVDWTEDTDNQNSQKSLKHRRVKHFGYEFHYENNNVDKDKPLPGGLPDICDSFLEKWLREGYIKHKPDQMTINQYEPGQGIPAHIDTHSAFEDEIVSLSLGSEIVMDFKHPDGTAVPVMLPRRSLLVMTGESRYLWTHGITCRKFDTVQASENHKSGIITSDVGDLTLSKRGLRTSFTFRKVRQTPCNCSYPLVCDSQRKETPPSFPESDEEASRLEQEYVHQVYEEIAGHFSSTRHTPWPHIVEFLKALPSGSIVADIGCGNGKYLGVNKELYMVGCDRSQNLVDICRERQFQAFVCDALAVPVRSGSCDACISIAVIHHFATAERRVAALQEIVRLLRPGGKALIYVWAMEQEYNKQKSKYLKGNRNSQGKKEEMNSDTSVQRSLVEQMPDMGSRDSASSVPRINDSQEGGCNSRQVSNSKLPIHVNRTSFYSQDMLVPWHLKGNPDKGKPVEPFGPIGSQDPSPVFHRYYHVFREGELEALCRTVSDVRILQSYYDQGNWCVILQKA</sequence>
<reference key="1">
    <citation type="journal article" date="2002" name="Genome Biol.">
        <title>Prediction of unidentified human genes on the basis of sequence similarity to novel cDNAs from cynomolgus monkey brain.</title>
        <authorList>
            <person name="Osada N."/>
            <person name="Hida M."/>
            <person name="Kusuda J."/>
            <person name="Tanuma R."/>
            <person name="Hirata M."/>
            <person name="Hirai M."/>
            <person name="Terao K."/>
            <person name="Suzuki Y."/>
            <person name="Sugano S."/>
            <person name="Hashimoto K."/>
        </authorList>
    </citation>
    <scope>NUCLEOTIDE SEQUENCE [LARGE SCALE MRNA]</scope>
    <source>
        <tissue>Temporal cortex</tissue>
    </source>
</reference>
<evidence type="ECO:0000250" key="1"/>
<evidence type="ECO:0000250" key="2">
    <source>
        <dbReference type="UniProtKB" id="Q96BT7"/>
    </source>
</evidence>
<evidence type="ECO:0000255" key="3">
    <source>
        <dbReference type="PROSITE-ProRule" id="PRU00805"/>
    </source>
</evidence>
<evidence type="ECO:0000256" key="4">
    <source>
        <dbReference type="SAM" id="MobiDB-lite"/>
    </source>
</evidence>
<evidence type="ECO:0000305" key="5"/>
<keyword id="KW-0963">Cytoplasm</keyword>
<keyword id="KW-0408">Iron</keyword>
<keyword id="KW-0479">Metal-binding</keyword>
<keyword id="KW-0489">Methyltransferase</keyword>
<keyword id="KW-0511">Multifunctional enzyme</keyword>
<keyword id="KW-0539">Nucleus</keyword>
<keyword id="KW-1185">Reference proteome</keyword>
<keyword id="KW-0694">RNA-binding</keyword>
<keyword id="KW-0949">S-adenosyl-L-methionine</keyword>
<keyword id="KW-0808">Transferase</keyword>
<keyword id="KW-0862">Zinc</keyword>
<organism>
    <name type="scientific">Macaca fascicularis</name>
    <name type="common">Crab-eating macaque</name>
    <name type="synonym">Cynomolgus monkey</name>
    <dbReference type="NCBI Taxonomy" id="9541"/>
    <lineage>
        <taxon>Eukaryota</taxon>
        <taxon>Metazoa</taxon>
        <taxon>Chordata</taxon>
        <taxon>Craniata</taxon>
        <taxon>Vertebrata</taxon>
        <taxon>Euteleostomi</taxon>
        <taxon>Mammalia</taxon>
        <taxon>Eutheria</taxon>
        <taxon>Euarchontoglires</taxon>
        <taxon>Primates</taxon>
        <taxon>Haplorrhini</taxon>
        <taxon>Catarrhini</taxon>
        <taxon>Cercopithecidae</taxon>
        <taxon>Cercopithecinae</taxon>
        <taxon>Macaca</taxon>
    </lineage>
</organism>
<accession>Q95K79</accession>
<name>ALKB8_MACFA</name>
<feature type="chain" id="PRO_0000337126" description="tRNA (carboxymethyluridine(34)-5-O)-methyltransferase ALKBH8">
    <location>
        <begin position="1"/>
        <end position="664"/>
    </location>
</feature>
<feature type="domain" description="RRM">
    <location>
        <begin position="43"/>
        <end position="120"/>
    </location>
</feature>
<feature type="domain" description="Fe2OG dioxygenase" evidence="3">
    <location>
        <begin position="220"/>
        <end position="337"/>
    </location>
</feature>
<feature type="region of interest" description="Methyltransferase domain" evidence="1">
    <location>
        <begin position="411"/>
        <end position="664"/>
    </location>
</feature>
<feature type="region of interest" description="Disordered" evidence="4">
    <location>
        <begin position="516"/>
        <end position="575"/>
    </location>
</feature>
<feature type="compositionally biased region" description="Polar residues" evidence="4">
    <location>
        <begin position="552"/>
        <end position="575"/>
    </location>
</feature>
<feature type="binding site" evidence="2">
    <location>
        <begin position="227"/>
        <end position="229"/>
    </location>
    <ligand>
        <name>2-oxoglutarate</name>
        <dbReference type="ChEBI" id="CHEBI:16810"/>
    </ligand>
</feature>
<feature type="binding site" evidence="3">
    <location>
        <position position="238"/>
    </location>
    <ligand>
        <name>Fe cation</name>
        <dbReference type="ChEBI" id="CHEBI:24875"/>
        <note>catalytic</note>
    </ligand>
</feature>
<feature type="binding site" evidence="3">
    <location>
        <position position="240"/>
    </location>
    <ligand>
        <name>Fe cation</name>
        <dbReference type="ChEBI" id="CHEBI:24875"/>
        <note>catalytic</note>
    </ligand>
</feature>
<feature type="binding site" evidence="2">
    <location>
        <position position="242"/>
    </location>
    <ligand>
        <name>Zn(2+)</name>
        <dbReference type="ChEBI" id="CHEBI:29105"/>
    </ligand>
</feature>
<feature type="binding site" evidence="3">
    <location>
        <position position="292"/>
    </location>
    <ligand>
        <name>Fe cation</name>
        <dbReference type="ChEBI" id="CHEBI:24875"/>
        <note>catalytic</note>
    </ligand>
</feature>
<feature type="binding site" evidence="2">
    <location>
        <position position="328"/>
    </location>
    <ligand>
        <name>2-oxoglutarate</name>
        <dbReference type="ChEBI" id="CHEBI:16810"/>
    </ligand>
</feature>
<feature type="binding site" evidence="2">
    <location>
        <position position="334"/>
    </location>
    <ligand>
        <name>2-oxoglutarate</name>
        <dbReference type="ChEBI" id="CHEBI:16810"/>
    </ligand>
</feature>
<feature type="binding site" evidence="2">
    <location>
        <position position="341"/>
    </location>
    <ligand>
        <name>Zn(2+)</name>
        <dbReference type="ChEBI" id="CHEBI:29105"/>
    </ligand>
</feature>
<feature type="binding site" evidence="2">
    <location>
        <position position="343"/>
    </location>
    <ligand>
        <name>Zn(2+)</name>
        <dbReference type="ChEBI" id="CHEBI:29105"/>
    </ligand>
</feature>
<feature type="binding site" evidence="2">
    <location>
        <position position="349"/>
    </location>
    <ligand>
        <name>Zn(2+)</name>
        <dbReference type="ChEBI" id="CHEBI:29105"/>
    </ligand>
</feature>
<dbReference type="EC" id="2.1.1.229" evidence="2"/>
<dbReference type="EMBL" id="AB063089">
    <property type="protein sequence ID" value="BAB60797.1"/>
    <property type="molecule type" value="mRNA"/>
</dbReference>
<dbReference type="RefSeq" id="NP_001306286.1">
    <property type="nucleotide sequence ID" value="NM_001319357.1"/>
</dbReference>
<dbReference type="SMR" id="Q95K79"/>
<dbReference type="STRING" id="9541.ENSMFAP00000033328"/>
<dbReference type="eggNOG" id="KOG1331">
    <property type="taxonomic scope" value="Eukaryota"/>
</dbReference>
<dbReference type="eggNOG" id="KOG4176">
    <property type="taxonomic scope" value="Eukaryota"/>
</dbReference>
<dbReference type="Proteomes" id="UP000233100">
    <property type="component" value="Unplaced"/>
</dbReference>
<dbReference type="GO" id="GO:0005829">
    <property type="term" value="C:cytosol"/>
    <property type="evidence" value="ECO:0000250"/>
    <property type="project" value="UniProtKB"/>
</dbReference>
<dbReference type="GO" id="GO:0005634">
    <property type="term" value="C:nucleus"/>
    <property type="evidence" value="ECO:0000250"/>
    <property type="project" value="UniProtKB"/>
</dbReference>
<dbReference type="GO" id="GO:0016706">
    <property type="term" value="F:2-oxoglutarate-dependent dioxygenase activity"/>
    <property type="evidence" value="ECO:0007669"/>
    <property type="project" value="InterPro"/>
</dbReference>
<dbReference type="GO" id="GO:0005506">
    <property type="term" value="F:iron ion binding"/>
    <property type="evidence" value="ECO:0000250"/>
    <property type="project" value="UniProtKB"/>
</dbReference>
<dbReference type="GO" id="GO:0008757">
    <property type="term" value="F:S-adenosylmethionine-dependent methyltransferase activity"/>
    <property type="evidence" value="ECO:0007669"/>
    <property type="project" value="InterPro"/>
</dbReference>
<dbReference type="GO" id="GO:0106335">
    <property type="term" value="F:tRNA (5-carboxymethyluridine(34)-5-O)-methyltransferase activity"/>
    <property type="evidence" value="ECO:0007669"/>
    <property type="project" value="UniProtKB-EC"/>
</dbReference>
<dbReference type="GO" id="GO:0016300">
    <property type="term" value="F:tRNA (uridine) methyltransferase activity"/>
    <property type="evidence" value="ECO:0000250"/>
    <property type="project" value="UniProtKB"/>
</dbReference>
<dbReference type="GO" id="GO:0000049">
    <property type="term" value="F:tRNA binding"/>
    <property type="evidence" value="ECO:0000250"/>
    <property type="project" value="UniProtKB"/>
</dbReference>
<dbReference type="GO" id="GO:0008270">
    <property type="term" value="F:zinc ion binding"/>
    <property type="evidence" value="ECO:0000250"/>
    <property type="project" value="UniProtKB"/>
</dbReference>
<dbReference type="GO" id="GO:0006974">
    <property type="term" value="P:DNA damage response"/>
    <property type="evidence" value="ECO:0000250"/>
    <property type="project" value="UniProtKB"/>
</dbReference>
<dbReference type="GO" id="GO:0030488">
    <property type="term" value="P:tRNA methylation"/>
    <property type="evidence" value="ECO:0000250"/>
    <property type="project" value="UniProtKB"/>
</dbReference>
<dbReference type="GO" id="GO:0002098">
    <property type="term" value="P:tRNA wobble uridine modification"/>
    <property type="evidence" value="ECO:0000250"/>
    <property type="project" value="UniProtKB"/>
</dbReference>
<dbReference type="CDD" id="cd02440">
    <property type="entry name" value="AdoMet_MTases"/>
    <property type="match status" value="1"/>
</dbReference>
<dbReference type="CDD" id="cd12431">
    <property type="entry name" value="RRM_ALKBH8"/>
    <property type="match status" value="1"/>
</dbReference>
<dbReference type="FunFam" id="2.60.120.1520:FF:000001">
    <property type="entry name" value="Alkylated DNA repair protein alkB homolog 8"/>
    <property type="match status" value="1"/>
</dbReference>
<dbReference type="FunFam" id="3.30.70.330:FF:000313">
    <property type="entry name" value="Alkylated DNA repair protein alkB homolog 8"/>
    <property type="match status" value="1"/>
</dbReference>
<dbReference type="Gene3D" id="2.60.120.1520">
    <property type="match status" value="1"/>
</dbReference>
<dbReference type="Gene3D" id="3.30.70.330">
    <property type="match status" value="1"/>
</dbReference>
<dbReference type="Gene3D" id="3.40.50.150">
    <property type="entry name" value="Vaccinia Virus protein VP39"/>
    <property type="match status" value="1"/>
</dbReference>
<dbReference type="InterPro" id="IPR027450">
    <property type="entry name" value="AlkB-like"/>
</dbReference>
<dbReference type="InterPro" id="IPR015095">
    <property type="entry name" value="AlkB_hom8_N"/>
</dbReference>
<dbReference type="InterPro" id="IPR051422">
    <property type="entry name" value="AlkB_tRNA_MeTrf/Diox"/>
</dbReference>
<dbReference type="InterPro" id="IPR034256">
    <property type="entry name" value="ALKBH8_RRM"/>
</dbReference>
<dbReference type="InterPro" id="IPR013216">
    <property type="entry name" value="Methyltransf_11"/>
</dbReference>
<dbReference type="InterPro" id="IPR012677">
    <property type="entry name" value="Nucleotide-bd_a/b_plait_sf"/>
</dbReference>
<dbReference type="InterPro" id="IPR005123">
    <property type="entry name" value="Oxoglu/Fe-dep_dioxygenase_dom"/>
</dbReference>
<dbReference type="InterPro" id="IPR035979">
    <property type="entry name" value="RBD_domain_sf"/>
</dbReference>
<dbReference type="InterPro" id="IPR000504">
    <property type="entry name" value="RRM_dom"/>
</dbReference>
<dbReference type="InterPro" id="IPR029063">
    <property type="entry name" value="SAM-dependent_MTases_sf"/>
</dbReference>
<dbReference type="PANTHER" id="PTHR13069">
    <property type="entry name" value="ALKYLATED DNA REPAIR PROTEIN ALKB HOMOLOG 8"/>
    <property type="match status" value="1"/>
</dbReference>
<dbReference type="PANTHER" id="PTHR13069:SF21">
    <property type="entry name" value="ALKYLATED DNA REPAIR PROTEIN ALKB HOMOLOG 8"/>
    <property type="match status" value="1"/>
</dbReference>
<dbReference type="Pfam" id="PF13532">
    <property type="entry name" value="2OG-FeII_Oxy_2"/>
    <property type="match status" value="1"/>
</dbReference>
<dbReference type="Pfam" id="PF09004">
    <property type="entry name" value="ALKBH8_N"/>
    <property type="match status" value="1"/>
</dbReference>
<dbReference type="Pfam" id="PF08241">
    <property type="entry name" value="Methyltransf_11"/>
    <property type="match status" value="1"/>
</dbReference>
<dbReference type="Pfam" id="PF00076">
    <property type="entry name" value="RRM_1"/>
    <property type="match status" value="1"/>
</dbReference>
<dbReference type="SUPFAM" id="SSF51197">
    <property type="entry name" value="Clavaminate synthase-like"/>
    <property type="match status" value="1"/>
</dbReference>
<dbReference type="SUPFAM" id="SSF54928">
    <property type="entry name" value="RNA-binding domain, RBD"/>
    <property type="match status" value="1"/>
</dbReference>
<dbReference type="SUPFAM" id="SSF53335">
    <property type="entry name" value="S-adenosyl-L-methionine-dependent methyltransferases"/>
    <property type="match status" value="1"/>
</dbReference>
<dbReference type="PROSITE" id="PS51471">
    <property type="entry name" value="FE2OG_OXY"/>
    <property type="match status" value="1"/>
</dbReference>